<comment type="function">
    <text evidence="1">May be involved in multidrug export. Transmembrane domains (TMD) form a pore in the cell membrane and the ATP-binding domain (NBD) is responsible for energy generation (By similarity).</text>
</comment>
<comment type="subunit">
    <text evidence="1">Homodimer.</text>
</comment>
<comment type="subcellular location">
    <subcellularLocation>
        <location evidence="1">Cell membrane</location>
        <topology evidence="4">Multi-pass membrane protein</topology>
    </subcellularLocation>
</comment>
<comment type="domain">
    <text>The ATP-binding domain (NBD) and the transmembrane domain (TMD) are fused.</text>
</comment>
<comment type="similarity">
    <text evidence="5">Belongs to the ABC transporter superfamily.</text>
</comment>
<feature type="chain" id="PRO_0000271547" description="Putative multidrug export ATP-binding/permease protein SAB1799c">
    <location>
        <begin position="1"/>
        <end position="578"/>
    </location>
</feature>
<feature type="topological domain" description="Cytoplasmic" evidence="2">
    <location>
        <begin position="1"/>
        <end position="15"/>
    </location>
</feature>
<feature type="transmembrane region" description="Helical" evidence="4">
    <location>
        <begin position="16"/>
        <end position="36"/>
    </location>
</feature>
<feature type="topological domain" description="Extracellular" evidence="2">
    <location>
        <begin position="37"/>
        <end position="59"/>
    </location>
</feature>
<feature type="transmembrane region" description="Helical" evidence="4">
    <location>
        <begin position="60"/>
        <end position="80"/>
    </location>
</feature>
<feature type="topological domain" description="Cytoplasmic" evidence="2">
    <location>
        <begin position="81"/>
        <end position="138"/>
    </location>
</feature>
<feature type="transmembrane region" description="Helical" evidence="4">
    <location>
        <begin position="139"/>
        <end position="159"/>
    </location>
</feature>
<feature type="topological domain" description="Extracellular" evidence="2">
    <location>
        <begin position="160"/>
        <end position="162"/>
    </location>
</feature>
<feature type="transmembrane region" description="Helical" evidence="4">
    <location>
        <begin position="163"/>
        <end position="183"/>
    </location>
</feature>
<feature type="topological domain" description="Cytoplasmic" evidence="2">
    <location>
        <begin position="184"/>
        <end position="242"/>
    </location>
</feature>
<feature type="transmembrane region" description="Helical" evidence="4">
    <location>
        <begin position="243"/>
        <end position="262"/>
    </location>
</feature>
<feature type="topological domain" description="Extracellular" evidence="2">
    <location>
        <begin position="263"/>
        <end position="267"/>
    </location>
</feature>
<feature type="transmembrane region" description="Helical" evidence="4">
    <location>
        <begin position="268"/>
        <end position="287"/>
    </location>
</feature>
<feature type="topological domain" description="Cytoplasmic" evidence="2">
    <location>
        <begin position="288"/>
        <end position="578"/>
    </location>
</feature>
<feature type="domain" description="ABC transmembrane type-1" evidence="4">
    <location>
        <begin position="16"/>
        <end position="306"/>
    </location>
</feature>
<feature type="domain" description="ABC transporter" evidence="3">
    <location>
        <begin position="340"/>
        <end position="575"/>
    </location>
</feature>
<feature type="binding site" evidence="3">
    <location>
        <begin position="374"/>
        <end position="381"/>
    </location>
    <ligand>
        <name>ATP</name>
        <dbReference type="ChEBI" id="CHEBI:30616"/>
    </ligand>
</feature>
<keyword id="KW-0067">ATP-binding</keyword>
<keyword id="KW-1003">Cell membrane</keyword>
<keyword id="KW-0472">Membrane</keyword>
<keyword id="KW-0547">Nucleotide-binding</keyword>
<keyword id="KW-1278">Translocase</keyword>
<keyword id="KW-0812">Transmembrane</keyword>
<keyword id="KW-1133">Transmembrane helix</keyword>
<keyword id="KW-0813">Transport</keyword>
<accession>Q2YU20</accession>
<proteinExistence type="inferred from homology"/>
<sequence>MIKRYLQFVKPYKYRIFATIIVGIIKFGIPMLIPLLIKYAIDGVINNHALTTDEKVHHLTIAIGIALFIFVIVRPPIEFIRQYLAQWTSNKILYDIRKKLYNHLQALSARFYANNQVGQVISRVINDVEQTKDFILTGLMNIWLDCITIIIALSIMFFLDVKLTLAALFIFPFYILTVYVFFGRLRKLTRERSQALAEVQGFLHERVQGISVVKSFAIEDNEAKNFDKKNANFLTRALKHTRWNAYSFATINTVTDIGPIIVIGVGAYLAISGSITVGTLAAFVGYLELLFGPLRRLVASFTTLTQSFASMDRVFQLIDEDYDIKNGVGAQPIEIKQGRIDIYHVNFQYNDNEAPILKDINLSIEKGETVAFVGMSGGGKSTLINLIPRFYDVTSGQILIDGHNIKDFLTGSLRNQIGLVQQDNILFSDTVKENILLGRPTATDEEVVEVAKVANAHDFIMNLPQGYDTEVGERGVKLSGGQKQRLSIARIFLNNPPILILDEATSALDLESESIIQEALDVLSKDRTTLIVAHRLSTITHADKIVVIENGHIVETGTHRELIAKQGAYEHLYSIQNL</sequence>
<dbReference type="EC" id="7.6.2.-"/>
<dbReference type="EMBL" id="AJ938182">
    <property type="protein sequence ID" value="CAI81488.1"/>
    <property type="molecule type" value="Genomic_DNA"/>
</dbReference>
<dbReference type="RefSeq" id="WP_000597234.1">
    <property type="nucleotide sequence ID" value="NC_007622.1"/>
</dbReference>
<dbReference type="SMR" id="Q2YU20"/>
<dbReference type="KEGG" id="sab:SAB1799c"/>
<dbReference type="HOGENOM" id="CLU_000604_84_3_9"/>
<dbReference type="GO" id="GO:0005886">
    <property type="term" value="C:plasma membrane"/>
    <property type="evidence" value="ECO:0007669"/>
    <property type="project" value="UniProtKB-SubCell"/>
</dbReference>
<dbReference type="GO" id="GO:0015421">
    <property type="term" value="F:ABC-type oligopeptide transporter activity"/>
    <property type="evidence" value="ECO:0007669"/>
    <property type="project" value="TreeGrafter"/>
</dbReference>
<dbReference type="GO" id="GO:0005524">
    <property type="term" value="F:ATP binding"/>
    <property type="evidence" value="ECO:0007669"/>
    <property type="project" value="UniProtKB-KW"/>
</dbReference>
<dbReference type="GO" id="GO:0016887">
    <property type="term" value="F:ATP hydrolysis activity"/>
    <property type="evidence" value="ECO:0007669"/>
    <property type="project" value="InterPro"/>
</dbReference>
<dbReference type="CDD" id="cd18554">
    <property type="entry name" value="ABC_6TM_Sav1866_like"/>
    <property type="match status" value="1"/>
</dbReference>
<dbReference type="CDD" id="cd03251">
    <property type="entry name" value="ABCC_MsbA"/>
    <property type="match status" value="1"/>
</dbReference>
<dbReference type="FunFam" id="1.20.1560.10:FF:000069">
    <property type="entry name" value="Multidrug ABC transporter ATP-binding protein"/>
    <property type="match status" value="1"/>
</dbReference>
<dbReference type="FunFam" id="3.40.50.300:FF:000218">
    <property type="entry name" value="Multidrug ABC transporter ATP-binding protein"/>
    <property type="match status" value="1"/>
</dbReference>
<dbReference type="Gene3D" id="1.20.1560.10">
    <property type="entry name" value="ABC transporter type 1, transmembrane domain"/>
    <property type="match status" value="1"/>
</dbReference>
<dbReference type="Gene3D" id="3.40.50.300">
    <property type="entry name" value="P-loop containing nucleotide triphosphate hydrolases"/>
    <property type="match status" value="1"/>
</dbReference>
<dbReference type="InterPro" id="IPR003593">
    <property type="entry name" value="AAA+_ATPase"/>
</dbReference>
<dbReference type="InterPro" id="IPR011527">
    <property type="entry name" value="ABC1_TM_dom"/>
</dbReference>
<dbReference type="InterPro" id="IPR036640">
    <property type="entry name" value="ABC1_TM_sf"/>
</dbReference>
<dbReference type="InterPro" id="IPR003439">
    <property type="entry name" value="ABC_transporter-like_ATP-bd"/>
</dbReference>
<dbReference type="InterPro" id="IPR017871">
    <property type="entry name" value="ABC_transporter-like_CS"/>
</dbReference>
<dbReference type="InterPro" id="IPR027417">
    <property type="entry name" value="P-loop_NTPase"/>
</dbReference>
<dbReference type="InterPro" id="IPR039421">
    <property type="entry name" value="Type_1_exporter"/>
</dbReference>
<dbReference type="PANTHER" id="PTHR43394:SF1">
    <property type="entry name" value="ATP-BINDING CASSETTE SUB-FAMILY B MEMBER 10, MITOCHONDRIAL"/>
    <property type="match status" value="1"/>
</dbReference>
<dbReference type="PANTHER" id="PTHR43394">
    <property type="entry name" value="ATP-DEPENDENT PERMEASE MDL1, MITOCHONDRIAL"/>
    <property type="match status" value="1"/>
</dbReference>
<dbReference type="Pfam" id="PF00664">
    <property type="entry name" value="ABC_membrane"/>
    <property type="match status" value="1"/>
</dbReference>
<dbReference type="Pfam" id="PF00005">
    <property type="entry name" value="ABC_tran"/>
    <property type="match status" value="1"/>
</dbReference>
<dbReference type="SMART" id="SM00382">
    <property type="entry name" value="AAA"/>
    <property type="match status" value="1"/>
</dbReference>
<dbReference type="SUPFAM" id="SSF90123">
    <property type="entry name" value="ABC transporter transmembrane region"/>
    <property type="match status" value="1"/>
</dbReference>
<dbReference type="SUPFAM" id="SSF52540">
    <property type="entry name" value="P-loop containing nucleoside triphosphate hydrolases"/>
    <property type="match status" value="1"/>
</dbReference>
<dbReference type="PROSITE" id="PS50929">
    <property type="entry name" value="ABC_TM1F"/>
    <property type="match status" value="1"/>
</dbReference>
<dbReference type="PROSITE" id="PS00211">
    <property type="entry name" value="ABC_TRANSPORTER_1"/>
    <property type="match status" value="1"/>
</dbReference>
<dbReference type="PROSITE" id="PS50893">
    <property type="entry name" value="ABC_TRANSPORTER_2"/>
    <property type="match status" value="1"/>
</dbReference>
<gene>
    <name type="ordered locus">SAB1799c</name>
</gene>
<name>Y1799_STAAB</name>
<reference key="1">
    <citation type="journal article" date="2007" name="PLoS ONE">
        <title>Molecular correlates of host specialization in Staphylococcus aureus.</title>
        <authorList>
            <person name="Herron-Olson L."/>
            <person name="Fitzgerald J.R."/>
            <person name="Musser J.M."/>
            <person name="Kapur V."/>
        </authorList>
    </citation>
    <scope>NUCLEOTIDE SEQUENCE [LARGE SCALE GENOMIC DNA]</scope>
    <source>
        <strain>bovine RF122 / ET3-1</strain>
    </source>
</reference>
<protein>
    <recommendedName>
        <fullName>Putative multidrug export ATP-binding/permease protein SAB1799c</fullName>
        <ecNumber>7.6.2.-</ecNumber>
    </recommendedName>
</protein>
<evidence type="ECO:0000250" key="1"/>
<evidence type="ECO:0000255" key="2"/>
<evidence type="ECO:0000255" key="3">
    <source>
        <dbReference type="PROSITE-ProRule" id="PRU00434"/>
    </source>
</evidence>
<evidence type="ECO:0000255" key="4">
    <source>
        <dbReference type="PROSITE-ProRule" id="PRU00441"/>
    </source>
</evidence>
<evidence type="ECO:0000305" key="5"/>
<organism>
    <name type="scientific">Staphylococcus aureus (strain bovine RF122 / ET3-1)</name>
    <dbReference type="NCBI Taxonomy" id="273036"/>
    <lineage>
        <taxon>Bacteria</taxon>
        <taxon>Bacillati</taxon>
        <taxon>Bacillota</taxon>
        <taxon>Bacilli</taxon>
        <taxon>Bacillales</taxon>
        <taxon>Staphylococcaceae</taxon>
        <taxon>Staphylococcus</taxon>
    </lineage>
</organism>